<dbReference type="EC" id="1.13.11.16" evidence="1"/>
<dbReference type="EMBL" id="CP000948">
    <property type="protein sequence ID" value="ACB02465.1"/>
    <property type="molecule type" value="Genomic_DNA"/>
</dbReference>
<dbReference type="RefSeq" id="WP_000543457.1">
    <property type="nucleotide sequence ID" value="NC_010473.1"/>
</dbReference>
<dbReference type="SMR" id="B1XBJ5"/>
<dbReference type="GeneID" id="93777107"/>
<dbReference type="KEGG" id="ecd:ECDH10B_1360"/>
<dbReference type="HOGENOM" id="CLU_078149_0_0_6"/>
<dbReference type="UniPathway" id="UPA00714"/>
<dbReference type="GO" id="GO:0047070">
    <property type="term" value="F:3-carboxyethylcatechol 2,3-dioxygenase activity"/>
    <property type="evidence" value="ECO:0007669"/>
    <property type="project" value="UniProtKB-UniRule"/>
</dbReference>
<dbReference type="GO" id="GO:0008198">
    <property type="term" value="F:ferrous iron binding"/>
    <property type="evidence" value="ECO:0007669"/>
    <property type="project" value="InterPro"/>
</dbReference>
<dbReference type="GO" id="GO:0019380">
    <property type="term" value="P:3-phenylpropionate catabolic process"/>
    <property type="evidence" value="ECO:0007669"/>
    <property type="project" value="UniProtKB-UniRule"/>
</dbReference>
<dbReference type="CDD" id="cd07365">
    <property type="entry name" value="MhpB_like"/>
    <property type="match status" value="1"/>
</dbReference>
<dbReference type="Gene3D" id="3.40.830.10">
    <property type="entry name" value="LigB-like"/>
    <property type="match status" value="1"/>
</dbReference>
<dbReference type="HAMAP" id="MF_01653">
    <property type="entry name" value="MhpB"/>
    <property type="match status" value="1"/>
</dbReference>
<dbReference type="InterPro" id="IPR023789">
    <property type="entry name" value="DHPP/DHXA_dioxygenase"/>
</dbReference>
<dbReference type="InterPro" id="IPR004183">
    <property type="entry name" value="Xdiol_dOase_suB"/>
</dbReference>
<dbReference type="NCBIfam" id="NF009907">
    <property type="entry name" value="PRK13370.1-1"/>
    <property type="match status" value="1"/>
</dbReference>
<dbReference type="NCBIfam" id="NF009910">
    <property type="entry name" value="PRK13370.1-4"/>
    <property type="match status" value="1"/>
</dbReference>
<dbReference type="Pfam" id="PF02900">
    <property type="entry name" value="LigB"/>
    <property type="match status" value="1"/>
</dbReference>
<dbReference type="SUPFAM" id="SSF53213">
    <property type="entry name" value="LigB-like"/>
    <property type="match status" value="1"/>
</dbReference>
<gene>
    <name evidence="1" type="primary">mhpB</name>
    <name type="ordered locus">ECDH10B_1360</name>
</gene>
<keyword id="KW-0058">Aromatic hydrocarbons catabolism</keyword>
<keyword id="KW-0223">Dioxygenase</keyword>
<keyword id="KW-0408">Iron</keyword>
<keyword id="KW-0560">Oxidoreductase</keyword>
<organism>
    <name type="scientific">Escherichia coli (strain K12 / DH10B)</name>
    <dbReference type="NCBI Taxonomy" id="316385"/>
    <lineage>
        <taxon>Bacteria</taxon>
        <taxon>Pseudomonadati</taxon>
        <taxon>Pseudomonadota</taxon>
        <taxon>Gammaproteobacteria</taxon>
        <taxon>Enterobacterales</taxon>
        <taxon>Enterobacteriaceae</taxon>
        <taxon>Escherichia</taxon>
    </lineage>
</organism>
<sequence>MHAYLHCLSHSPLVGYVDPAQEVLDEVNGVIASARERIAAFSPELVVLFAPDHYNGFFYDVMPPFCLGVGATAIGDFGSAAGELPVPVELAEACAHAVMKSGIDLAVSYCMQVDHGFAQPLEFLLGGLDKVPVLPVFINGVATPLPGFQRTRMLGEAIGRFTSTLNKRVLFLGSGGLSHQPPVPELAKADAHMRDRLLGSGKDLPASERELRQQRVISAAEKFVEDQRTLHPLNPIWDNQFMTLLEQGRIQELDAVSNEELSAIAGKSTHEIKTWVAAFAAISAFGNWRSEGRYYRPIPEWIAGFGSLSARTEN</sequence>
<feature type="chain" id="PRO_1000187005" description="2,3-dihydroxyphenylpropionate/2,3-dihydroxicinnamic acid 1,2-dioxygenase">
    <location>
        <begin position="1"/>
        <end position="314"/>
    </location>
</feature>
<feature type="active site" description="Proton donor" evidence="1">
    <location>
        <position position="115"/>
    </location>
</feature>
<feature type="active site" description="Proton acceptor" evidence="1">
    <location>
        <position position="179"/>
    </location>
</feature>
<name>MHPB_ECODH</name>
<proteinExistence type="inferred from homology"/>
<reference key="1">
    <citation type="journal article" date="2008" name="J. Bacteriol.">
        <title>The complete genome sequence of Escherichia coli DH10B: insights into the biology of a laboratory workhorse.</title>
        <authorList>
            <person name="Durfee T."/>
            <person name="Nelson R."/>
            <person name="Baldwin S."/>
            <person name="Plunkett G. III"/>
            <person name="Burland V."/>
            <person name="Mau B."/>
            <person name="Petrosino J.F."/>
            <person name="Qin X."/>
            <person name="Muzny D.M."/>
            <person name="Ayele M."/>
            <person name="Gibbs R.A."/>
            <person name="Csorgo B."/>
            <person name="Posfai G."/>
            <person name="Weinstock G.M."/>
            <person name="Blattner F.R."/>
        </authorList>
    </citation>
    <scope>NUCLEOTIDE SEQUENCE [LARGE SCALE GENOMIC DNA]</scope>
    <source>
        <strain>K12 / DH10B</strain>
    </source>
</reference>
<evidence type="ECO:0000255" key="1">
    <source>
        <dbReference type="HAMAP-Rule" id="MF_01653"/>
    </source>
</evidence>
<protein>
    <recommendedName>
        <fullName evidence="1">2,3-dihydroxyphenylpropionate/2,3-dihydroxicinnamic acid 1,2-dioxygenase</fullName>
        <ecNumber evidence="1">1.13.11.16</ecNumber>
    </recommendedName>
    <alternativeName>
        <fullName evidence="1">3-carboxyethylcatechol 2,3-dioxygenase</fullName>
    </alternativeName>
</protein>
<comment type="function">
    <text evidence="1">Catalyzes the non-heme iron(II)-dependent oxidative cleavage of 2,3-dihydroxyphenylpropionic acid and 2,3-dihydroxicinnamic acid into 2-hydroxy-6-ketononadienedioate and 2-hydroxy-6-ketononatrienedioate, respectively.</text>
</comment>
<comment type="catalytic activity">
    <reaction evidence="1">
        <text>3-(2,3-dihydroxyphenyl)propanoate + O2 = (2Z,4E)-2-hydroxy-6-oxonona-2,4-dienedioate + H(+)</text>
        <dbReference type="Rhea" id="RHEA:23840"/>
        <dbReference type="ChEBI" id="CHEBI:15378"/>
        <dbReference type="ChEBI" id="CHEBI:15379"/>
        <dbReference type="ChEBI" id="CHEBI:46951"/>
        <dbReference type="ChEBI" id="CHEBI:66887"/>
        <dbReference type="EC" id="1.13.11.16"/>
    </reaction>
</comment>
<comment type="catalytic activity">
    <reaction evidence="1">
        <text>(2E)-3-(2,3-dihydroxyphenyl)prop-2-enoate + O2 = (2Z,4E,7E)-2-hydroxy-6-oxonona-2,4,7-trienedioate + H(+)</text>
        <dbReference type="Rhea" id="RHEA:25054"/>
        <dbReference type="ChEBI" id="CHEBI:15378"/>
        <dbReference type="ChEBI" id="CHEBI:15379"/>
        <dbReference type="ChEBI" id="CHEBI:58642"/>
        <dbReference type="ChEBI" id="CHEBI:66888"/>
        <dbReference type="EC" id="1.13.11.16"/>
    </reaction>
</comment>
<comment type="cofactor">
    <cofactor evidence="1">
        <name>Fe(2+)</name>
        <dbReference type="ChEBI" id="CHEBI:29033"/>
    </cofactor>
</comment>
<comment type="pathway">
    <text evidence="1">Aromatic compound metabolism; 3-phenylpropanoate degradation.</text>
</comment>
<comment type="subunit">
    <text evidence="1">Homotetramer.</text>
</comment>
<comment type="similarity">
    <text evidence="1">Belongs to the LigB/MhpB extradiol dioxygenase family.</text>
</comment>
<accession>B1XBJ5</accession>